<protein>
    <recommendedName>
        <fullName>Leucine-rich repeat-containing protein 66</fullName>
    </recommendedName>
    <alternativeName>
        <fullName>Liver regeneration-related protein LRRGT00044</fullName>
    </alternativeName>
</protein>
<proteinExistence type="evidence at protein level"/>
<gene>
    <name type="primary">Lrrc66</name>
</gene>
<comment type="subcellular location">
    <subcellularLocation>
        <location evidence="4">Membrane</location>
        <topology evidence="4">Multi-pass membrane protein</topology>
    </subcellularLocation>
</comment>
<accession>Q6TXF5</accession>
<name>LRC66_RAT</name>
<dbReference type="EMBL" id="AY383699">
    <property type="protein sequence ID" value="AAQ96257.1"/>
    <property type="molecule type" value="mRNA"/>
</dbReference>
<dbReference type="RefSeq" id="NP_001008763.1">
    <property type="nucleotide sequence ID" value="NM_001008763.2"/>
</dbReference>
<dbReference type="RefSeq" id="XP_017454592.1">
    <property type="nucleotide sequence ID" value="XM_017599103.1"/>
</dbReference>
<dbReference type="RefSeq" id="XP_063128984.1">
    <property type="nucleotide sequence ID" value="XM_063272914.1"/>
</dbReference>
<dbReference type="RefSeq" id="XP_063128985.1">
    <property type="nucleotide sequence ID" value="XM_063272915.1"/>
</dbReference>
<dbReference type="RefSeq" id="XP_063128986.1">
    <property type="nucleotide sequence ID" value="XM_063272916.1"/>
</dbReference>
<dbReference type="FunCoup" id="Q6TXF5">
    <property type="interactions" value="1"/>
</dbReference>
<dbReference type="STRING" id="10116.ENSRNOP00000030477"/>
<dbReference type="GlyCosmos" id="Q6TXF5">
    <property type="glycosylation" value="3 sites, No reported glycans"/>
</dbReference>
<dbReference type="GlyGen" id="Q6TXF5">
    <property type="glycosylation" value="4 sites"/>
</dbReference>
<dbReference type="iPTMnet" id="Q6TXF5"/>
<dbReference type="PhosphoSitePlus" id="Q6TXF5"/>
<dbReference type="PaxDb" id="10116-ENSRNOP00000030477"/>
<dbReference type="GeneID" id="289587"/>
<dbReference type="KEGG" id="rno:289587"/>
<dbReference type="UCSC" id="RGD:1306094">
    <property type="organism name" value="rat"/>
</dbReference>
<dbReference type="AGR" id="RGD:1306094"/>
<dbReference type="CTD" id="339977"/>
<dbReference type="RGD" id="1306094">
    <property type="gene designation" value="Lrrc66"/>
</dbReference>
<dbReference type="VEuPathDB" id="HostDB:ENSRNOG00000026585"/>
<dbReference type="eggNOG" id="KOG0619">
    <property type="taxonomic scope" value="Eukaryota"/>
</dbReference>
<dbReference type="HOGENOM" id="CLU_016612_0_0_1"/>
<dbReference type="InParanoid" id="Q6TXF5"/>
<dbReference type="OrthoDB" id="75978at9989"/>
<dbReference type="PhylomeDB" id="Q6TXF5"/>
<dbReference type="TreeFam" id="TF332577"/>
<dbReference type="PRO" id="PR:Q6TXF5"/>
<dbReference type="Proteomes" id="UP000002494">
    <property type="component" value="Chromosome 14"/>
</dbReference>
<dbReference type="Bgee" id="ENSRNOG00000026585">
    <property type="expression patterns" value="Expressed in duodenum and 11 other cell types or tissues"/>
</dbReference>
<dbReference type="GO" id="GO:0016020">
    <property type="term" value="C:membrane"/>
    <property type="evidence" value="ECO:0007669"/>
    <property type="project" value="UniProtKB-SubCell"/>
</dbReference>
<dbReference type="Gene3D" id="3.80.10.10">
    <property type="entry name" value="Ribonuclease Inhibitor"/>
    <property type="match status" value="1"/>
</dbReference>
<dbReference type="InterPro" id="IPR001611">
    <property type="entry name" value="Leu-rich_rpt"/>
</dbReference>
<dbReference type="InterPro" id="IPR032675">
    <property type="entry name" value="LRR_dom_sf"/>
</dbReference>
<dbReference type="InterPro" id="IPR050541">
    <property type="entry name" value="LRR_TM_domain-containing"/>
</dbReference>
<dbReference type="PANTHER" id="PTHR24369">
    <property type="entry name" value="ANTIGEN BSP, PUTATIVE-RELATED"/>
    <property type="match status" value="1"/>
</dbReference>
<dbReference type="PANTHER" id="PTHR24369:SF213">
    <property type="entry name" value="INSULIN LIKE GROWTH FACTOR BINDING PROTEIN ACID LABILE SUBUNIT"/>
    <property type="match status" value="1"/>
</dbReference>
<dbReference type="Pfam" id="PF13855">
    <property type="entry name" value="LRR_8"/>
    <property type="match status" value="1"/>
</dbReference>
<dbReference type="SUPFAM" id="SSF52058">
    <property type="entry name" value="L domain-like"/>
    <property type="match status" value="1"/>
</dbReference>
<sequence>MKDFYARVTVMVTGLCFVGTVTNPSRKSSLSLHQQDGDLLANWSSTRHTSQKTDTVDRNSYFFRVLFQPHTKERHTNHLDRTNHRLSKVTLSCLAHLRALEMLNLGDDVIHSLCLDLSLPSSSRQKRHRSRFRGRHPRLKVLLLQRNQLGPTPKGLWKLKPLCSLDLSFNRRVGIGLSGFHGCLQLKSIYLKNNKILTIHPEAFKGLKKLQVVDLRSSALTMLVPIVTIALEWPNLELGLADNQWQCNESDANFQNIASVSWGEIWKAVCNTPVENEKPYVEASQIRISRDIHLPRSPSSDLQSLIQSKAEKPRAGMDVHLSALEKKAQVGYGDLKGIWLQSPMELRDSQGGPVTDRKDDKPPDLALAVCLSVFITFVVAFCLGAFARPYIDRLRQQRCLNKRPGSENAYSNEGFHDDVEAAQHVQHQGTDLCQTTHHLNLFENQDPSWGTEAIPHGAVLSERMLGSNGMDPSSQQSPGQFEDSGEARSGDGNMFPNGRVVHPAVHGLPSADAQKPISPGQHHYDVPEESLYDTVAQEYSLLDNAMDRSSVAGCLGTFPNSINSGRDELCPSQPRDVVASFSKTLAHMSTREAEESVERGFPEPLGAMGSQIESSEERQVSNSIRELATQQASFQEVDVEERLAHVYSEALYNDTPSHMPRHSSGHDVASATEEAVQRDASFDPHDDLVTNYESDSDEGSLFTLSSEGSQDTRSLTEEQAFVESGGDSQPLPSRNLGEYKDSVTSAESVEDITSQQTLEKREAQEAHLGNTLISGPDSCVHETHLENDSSPLDPENVPTWTQPPDHKLAHHETLGTFVYGDIGPQSEAVDWLYSLRDLEFPNIDSSPSPPCSDQDPSDPEEHDTK</sequence>
<reference key="1">
    <citation type="submission" date="2003-09" db="EMBL/GenBank/DDBJ databases">
        <title>Liver regeneration after PH.</title>
        <authorList>
            <person name="Xu C.S."/>
            <person name="Chang C.F."/>
            <person name="Han H.P."/>
            <person name="Wang G.P."/>
            <person name="Chai L.Q."/>
            <person name="Yuan J.Y."/>
            <person name="Yang K.J."/>
            <person name="Zhao L.F."/>
            <person name="Ma H."/>
            <person name="Wang L."/>
            <person name="Wang S.F."/>
            <person name="Xing X.K."/>
            <person name="Shen G.M."/>
            <person name="Shi J.B."/>
            <person name="Rahman S."/>
            <person name="Wang Q.N."/>
            <person name="Zhang J.B."/>
        </authorList>
    </citation>
    <scope>NUCLEOTIDE SEQUENCE [LARGE SCALE MRNA]</scope>
    <source>
        <strain>Sprague-Dawley</strain>
        <tissue>Liver</tissue>
    </source>
</reference>
<reference key="2">
    <citation type="journal article" date="2012" name="Nat. Commun.">
        <title>Quantitative maps of protein phosphorylation sites across 14 different rat organs and tissues.</title>
        <authorList>
            <person name="Lundby A."/>
            <person name="Secher A."/>
            <person name="Lage K."/>
            <person name="Nordsborg N.B."/>
            <person name="Dmytriyev A."/>
            <person name="Lundby C."/>
            <person name="Olsen J.V."/>
        </authorList>
    </citation>
    <scope>PHOSPHORYLATION [LARGE SCALE ANALYSIS] AT SER-714</scope>
    <scope>IDENTIFICATION BY MASS SPECTROMETRY [LARGE SCALE ANALYSIS]</scope>
</reference>
<feature type="chain" id="PRO_0000329435" description="Leucine-rich repeat-containing protein 66">
    <location>
        <begin position="1"/>
        <end position="865"/>
    </location>
</feature>
<feature type="transmembrane region" description="Helical" evidence="2">
    <location>
        <begin position="4"/>
        <end position="24"/>
    </location>
</feature>
<feature type="transmembrane region" description="Helical" evidence="2">
    <location>
        <begin position="366"/>
        <end position="386"/>
    </location>
</feature>
<feature type="repeat" description="LRR 1">
    <location>
        <begin position="138"/>
        <end position="160"/>
    </location>
</feature>
<feature type="repeat" description="LRR 2">
    <location>
        <begin position="161"/>
        <end position="182"/>
    </location>
</feature>
<feature type="repeat" description="LRR 3">
    <location>
        <begin position="185"/>
        <end position="206"/>
    </location>
</feature>
<feature type="repeat" description="LRR 4">
    <location>
        <begin position="209"/>
        <end position="230"/>
    </location>
</feature>
<feature type="repeat" description="LRR 5">
    <location>
        <begin position="235"/>
        <end position="255"/>
    </location>
</feature>
<feature type="domain" description="LRRNT">
    <location>
        <begin position="728"/>
        <end position="759"/>
    </location>
</feature>
<feature type="region of interest" description="Disordered" evidence="3">
    <location>
        <begin position="463"/>
        <end position="522"/>
    </location>
</feature>
<feature type="region of interest" description="Disordered" evidence="3">
    <location>
        <begin position="654"/>
        <end position="749"/>
    </location>
</feature>
<feature type="region of interest" description="Disordered" evidence="3">
    <location>
        <begin position="840"/>
        <end position="865"/>
    </location>
</feature>
<feature type="compositionally biased region" description="Polar residues" evidence="3">
    <location>
        <begin position="470"/>
        <end position="479"/>
    </location>
</feature>
<feature type="compositionally biased region" description="Basic and acidic residues" evidence="3">
    <location>
        <begin position="675"/>
        <end position="688"/>
    </location>
</feature>
<feature type="compositionally biased region" description="Polar residues" evidence="3">
    <location>
        <begin position="702"/>
        <end position="713"/>
    </location>
</feature>
<feature type="compositionally biased region" description="Acidic residues" evidence="3">
    <location>
        <begin position="855"/>
        <end position="865"/>
    </location>
</feature>
<feature type="modified residue" description="Phosphoserine" evidence="5">
    <location>
        <position position="714"/>
    </location>
</feature>
<feature type="modified residue" description="Phosphoserine" evidence="1">
    <location>
        <position position="748"/>
    </location>
</feature>
<feature type="glycosylation site" description="N-linked (GlcNAc...) asparagine" evidence="2">
    <location>
        <position position="42"/>
    </location>
</feature>
<feature type="glycosylation site" description="N-linked (GlcNAc...) asparagine" evidence="2">
    <location>
        <position position="248"/>
    </location>
</feature>
<feature type="glycosylation site" description="N-linked (GlcNAc...) asparagine" evidence="2">
    <location>
        <position position="787"/>
    </location>
</feature>
<keyword id="KW-0325">Glycoprotein</keyword>
<keyword id="KW-0433">Leucine-rich repeat</keyword>
<keyword id="KW-0472">Membrane</keyword>
<keyword id="KW-0597">Phosphoprotein</keyword>
<keyword id="KW-1185">Reference proteome</keyword>
<keyword id="KW-0677">Repeat</keyword>
<keyword id="KW-0812">Transmembrane</keyword>
<keyword id="KW-1133">Transmembrane helix</keyword>
<evidence type="ECO:0000250" key="1">
    <source>
        <dbReference type="UniProtKB" id="Q8K0B3"/>
    </source>
</evidence>
<evidence type="ECO:0000255" key="2"/>
<evidence type="ECO:0000256" key="3">
    <source>
        <dbReference type="SAM" id="MobiDB-lite"/>
    </source>
</evidence>
<evidence type="ECO:0000305" key="4"/>
<evidence type="ECO:0007744" key="5">
    <source>
    </source>
</evidence>
<organism>
    <name type="scientific">Rattus norvegicus</name>
    <name type="common">Rat</name>
    <dbReference type="NCBI Taxonomy" id="10116"/>
    <lineage>
        <taxon>Eukaryota</taxon>
        <taxon>Metazoa</taxon>
        <taxon>Chordata</taxon>
        <taxon>Craniata</taxon>
        <taxon>Vertebrata</taxon>
        <taxon>Euteleostomi</taxon>
        <taxon>Mammalia</taxon>
        <taxon>Eutheria</taxon>
        <taxon>Euarchontoglires</taxon>
        <taxon>Glires</taxon>
        <taxon>Rodentia</taxon>
        <taxon>Myomorpha</taxon>
        <taxon>Muroidea</taxon>
        <taxon>Muridae</taxon>
        <taxon>Murinae</taxon>
        <taxon>Rattus</taxon>
    </lineage>
</organism>